<protein>
    <recommendedName>
        <fullName>BTB/POZ domain-containing protein KCTD6</fullName>
    </recommendedName>
</protein>
<accession>Q6DG99</accession>
<feature type="chain" id="PRO_0000251250" description="BTB/POZ domain-containing protein KCTD6">
    <location>
        <begin position="1"/>
        <end position="237"/>
    </location>
</feature>
<feature type="domain" description="BTB">
    <location>
        <begin position="12"/>
        <end position="81"/>
    </location>
</feature>
<reference key="1">
    <citation type="submission" date="2004-07" db="EMBL/GenBank/DDBJ databases">
        <authorList>
            <consortium name="NIH - Zebrafish Gene Collection (ZGC) project"/>
        </authorList>
    </citation>
    <scope>NUCLEOTIDE SEQUENCE [LARGE SCALE MRNA]</scope>
</reference>
<sequence length="237" mass="27632">MDNGDWGHRLTHPVTLNVGGHLYTTSISTLQRYPDSMLGAMFRGDFPTTRDAQGNYFIDRDGTLFRYILNFLRTSELTLPVDFTELDLLRKEADFYQIEPLIQCLNDPKPLYPLDTFEQVVELSSTRKLSKYSNPVAVIITQLTITTKVHSLLEGISNNFTKWNKHMMDTRDCQVSFTFGPCDYHQEVSLRVHLMDYITKQGFTIRNTRVHHMSERANENTVEHHWTFCRLAYKVED</sequence>
<evidence type="ECO:0000250" key="1">
    <source>
        <dbReference type="UniProtKB" id="Q8NC69"/>
    </source>
</evidence>
<comment type="function">
    <text evidence="1">Probable substrate-specific adapter of a cullin-containing E3 ubiquitin-protein ligase complex mediating the ubiquitination and subsequent proteasomal degradation of target proteins.</text>
</comment>
<comment type="pathway">
    <text>Protein modification; protein ubiquitination.</text>
</comment>
<comment type="subunit">
    <text evidence="1">Homopentamer. May be part of a cullin-containing E3 ubiquitin-protein ligase complex.</text>
</comment>
<dbReference type="EMBL" id="BC076452">
    <property type="protein sequence ID" value="AAH76452.1"/>
    <property type="molecule type" value="mRNA"/>
</dbReference>
<dbReference type="RefSeq" id="NP_001002329.1">
    <property type="nucleotide sequence ID" value="NM_001002329.1"/>
</dbReference>
<dbReference type="SMR" id="Q6DG99"/>
<dbReference type="FunCoup" id="Q6DG99">
    <property type="interactions" value="328"/>
</dbReference>
<dbReference type="STRING" id="7955.ENSDARP00000034172"/>
<dbReference type="PaxDb" id="7955-ENSDARP00000034172"/>
<dbReference type="Ensembl" id="ENSDART00000031872">
    <property type="protein sequence ID" value="ENSDARP00000034172"/>
    <property type="gene ID" value="ENSDARG00000023703"/>
</dbReference>
<dbReference type="GeneID" id="436601"/>
<dbReference type="KEGG" id="dre:436601"/>
<dbReference type="AGR" id="ZFIN:ZDB-GENE-040718-14"/>
<dbReference type="CTD" id="436601"/>
<dbReference type="ZFIN" id="ZDB-GENE-040718-14">
    <property type="gene designation" value="kctd6b"/>
</dbReference>
<dbReference type="eggNOG" id="KOG2723">
    <property type="taxonomic scope" value="Eukaryota"/>
</dbReference>
<dbReference type="HOGENOM" id="CLU_070345_1_0_1"/>
<dbReference type="InParanoid" id="Q6DG99"/>
<dbReference type="OMA" id="FTIRMTR"/>
<dbReference type="OrthoDB" id="2414723at2759"/>
<dbReference type="PhylomeDB" id="Q6DG99"/>
<dbReference type="TreeFam" id="TF315332"/>
<dbReference type="Reactome" id="R-DRE-8951664">
    <property type="pathway name" value="Neddylation"/>
</dbReference>
<dbReference type="Reactome" id="R-DRE-983168">
    <property type="pathway name" value="Antigen processing: Ubiquitination &amp; Proteasome degradation"/>
</dbReference>
<dbReference type="UniPathway" id="UPA00143"/>
<dbReference type="PRO" id="PR:Q6DG99"/>
<dbReference type="Proteomes" id="UP000000437">
    <property type="component" value="Alternate scaffold 23"/>
</dbReference>
<dbReference type="Proteomes" id="UP000000437">
    <property type="component" value="Chromosome 23"/>
</dbReference>
<dbReference type="Bgee" id="ENSDARG00000023703">
    <property type="expression patterns" value="Expressed in brain and 22 other cell types or tissues"/>
</dbReference>
<dbReference type="GO" id="GO:0051260">
    <property type="term" value="P:protein homooligomerization"/>
    <property type="evidence" value="ECO:0007669"/>
    <property type="project" value="InterPro"/>
</dbReference>
<dbReference type="GO" id="GO:0016567">
    <property type="term" value="P:protein ubiquitination"/>
    <property type="evidence" value="ECO:0007669"/>
    <property type="project" value="UniProtKB-UniPathway"/>
</dbReference>
<dbReference type="CDD" id="cd18394">
    <property type="entry name" value="BTB_POZ_KCTD6"/>
    <property type="match status" value="1"/>
</dbReference>
<dbReference type="Gene3D" id="3.30.710.10">
    <property type="entry name" value="Potassium Channel Kv1.1, Chain A"/>
    <property type="match status" value="1"/>
</dbReference>
<dbReference type="InterPro" id="IPR000210">
    <property type="entry name" value="BTB/POZ_dom"/>
</dbReference>
<dbReference type="InterPro" id="IPR011333">
    <property type="entry name" value="SKP1/BTB/POZ_sf"/>
</dbReference>
<dbReference type="InterPro" id="IPR003131">
    <property type="entry name" value="T1-type_BTB"/>
</dbReference>
<dbReference type="PANTHER" id="PTHR14499:SF10">
    <property type="entry name" value="BTB_POZ DOMAIN-CONTAINING PROTEIN KCTD6"/>
    <property type="match status" value="1"/>
</dbReference>
<dbReference type="PANTHER" id="PTHR14499">
    <property type="entry name" value="POTASSIUM CHANNEL TETRAMERIZATION DOMAIN-CONTAINING"/>
    <property type="match status" value="1"/>
</dbReference>
<dbReference type="Pfam" id="PF02214">
    <property type="entry name" value="BTB_2"/>
    <property type="match status" value="1"/>
</dbReference>
<dbReference type="SMART" id="SM00225">
    <property type="entry name" value="BTB"/>
    <property type="match status" value="1"/>
</dbReference>
<dbReference type="SUPFAM" id="SSF54695">
    <property type="entry name" value="POZ domain"/>
    <property type="match status" value="1"/>
</dbReference>
<organism>
    <name type="scientific">Danio rerio</name>
    <name type="common">Zebrafish</name>
    <name type="synonym">Brachydanio rerio</name>
    <dbReference type="NCBI Taxonomy" id="7955"/>
    <lineage>
        <taxon>Eukaryota</taxon>
        <taxon>Metazoa</taxon>
        <taxon>Chordata</taxon>
        <taxon>Craniata</taxon>
        <taxon>Vertebrata</taxon>
        <taxon>Euteleostomi</taxon>
        <taxon>Actinopterygii</taxon>
        <taxon>Neopterygii</taxon>
        <taxon>Teleostei</taxon>
        <taxon>Ostariophysi</taxon>
        <taxon>Cypriniformes</taxon>
        <taxon>Danionidae</taxon>
        <taxon>Danioninae</taxon>
        <taxon>Danio</taxon>
    </lineage>
</organism>
<keyword id="KW-1185">Reference proteome</keyword>
<keyword id="KW-0833">Ubl conjugation pathway</keyword>
<gene>
    <name type="primary">kctd6</name>
    <name type="ORF">zgc:91884</name>
</gene>
<name>KCTD6_DANRE</name>
<proteinExistence type="evidence at transcript level"/>